<organism>
    <name type="scientific">Acetivibrio thermocellus (strain ATCC 27405 / DSM 1237 / JCM 9322 / NBRC 103400 / NCIMB 10682 / NRRL B-4536 / VPI 7372)</name>
    <name type="common">Clostridium thermocellum</name>
    <dbReference type="NCBI Taxonomy" id="203119"/>
    <lineage>
        <taxon>Bacteria</taxon>
        <taxon>Bacillati</taxon>
        <taxon>Bacillota</taxon>
        <taxon>Clostridia</taxon>
        <taxon>Eubacteriales</taxon>
        <taxon>Oscillospiraceae</taxon>
        <taxon>Acetivibrio</taxon>
    </lineage>
</organism>
<sequence length="283" mass="30680">MESISLKAHAKINLSLDVIGKRQDGYHEVRMIMQSIALHDEVVIEKRAAGIKVECDKPWVPEGSGNIAYKAANLMMERYKIESGVGIKILKRIPVAAGLAGGSADAAAVIKGMNELFNLNADEAELMDIGKQVGADVPFCIKGGTMLSEGIGEKLTKIPSFEGVNIVLVKPKVGVSTAWVYSNLKLNEISSRPDTELLIKAIYEKNIGCLAQNMTNVLETVTIKKYGVINDIKNELLRLGALGSMMSGSGPSVFGIFENEKQACLAYEGLKNSEWECFVTQTI</sequence>
<accession>A3DI26</accession>
<keyword id="KW-0067">ATP-binding</keyword>
<keyword id="KW-0414">Isoprene biosynthesis</keyword>
<keyword id="KW-0418">Kinase</keyword>
<keyword id="KW-0547">Nucleotide-binding</keyword>
<keyword id="KW-1185">Reference proteome</keyword>
<keyword id="KW-0808">Transferase</keyword>
<proteinExistence type="inferred from homology"/>
<name>ISPE_ACET2</name>
<protein>
    <recommendedName>
        <fullName evidence="1">4-diphosphocytidyl-2-C-methyl-D-erythritol kinase</fullName>
        <shortName evidence="1">CMK</shortName>
        <ecNumber evidence="1">2.7.1.148</ecNumber>
    </recommendedName>
    <alternativeName>
        <fullName evidence="1">4-(cytidine-5'-diphospho)-2-C-methyl-D-erythritol kinase</fullName>
    </alternativeName>
</protein>
<gene>
    <name evidence="1" type="primary">ispE</name>
    <name type="ordered locus">Cthe_2403</name>
</gene>
<feature type="chain" id="PRO_0000335708" description="4-diphosphocytidyl-2-C-methyl-D-erythritol kinase">
    <location>
        <begin position="1"/>
        <end position="283"/>
    </location>
</feature>
<feature type="active site" evidence="1">
    <location>
        <position position="11"/>
    </location>
</feature>
<feature type="active site" evidence="1">
    <location>
        <position position="136"/>
    </location>
</feature>
<feature type="binding site" evidence="1">
    <location>
        <begin position="94"/>
        <end position="104"/>
    </location>
    <ligand>
        <name>ATP</name>
        <dbReference type="ChEBI" id="CHEBI:30616"/>
    </ligand>
</feature>
<comment type="function">
    <text evidence="1">Catalyzes the phosphorylation of the position 2 hydroxy group of 4-diphosphocytidyl-2C-methyl-D-erythritol.</text>
</comment>
<comment type="catalytic activity">
    <reaction evidence="1">
        <text>4-CDP-2-C-methyl-D-erythritol + ATP = 4-CDP-2-C-methyl-D-erythritol 2-phosphate + ADP + H(+)</text>
        <dbReference type="Rhea" id="RHEA:18437"/>
        <dbReference type="ChEBI" id="CHEBI:15378"/>
        <dbReference type="ChEBI" id="CHEBI:30616"/>
        <dbReference type="ChEBI" id="CHEBI:57823"/>
        <dbReference type="ChEBI" id="CHEBI:57919"/>
        <dbReference type="ChEBI" id="CHEBI:456216"/>
        <dbReference type="EC" id="2.7.1.148"/>
    </reaction>
</comment>
<comment type="pathway">
    <text evidence="1">Isoprenoid biosynthesis; isopentenyl diphosphate biosynthesis via DXP pathway; isopentenyl diphosphate from 1-deoxy-D-xylulose 5-phosphate: step 3/6.</text>
</comment>
<comment type="similarity">
    <text evidence="1">Belongs to the GHMP kinase family. IspE subfamily.</text>
</comment>
<dbReference type="EC" id="2.7.1.148" evidence="1"/>
<dbReference type="EMBL" id="CP000568">
    <property type="protein sequence ID" value="ABN53605.1"/>
    <property type="molecule type" value="Genomic_DNA"/>
</dbReference>
<dbReference type="RefSeq" id="WP_020457789.1">
    <property type="nucleotide sequence ID" value="NC_009012.1"/>
</dbReference>
<dbReference type="SMR" id="A3DI26"/>
<dbReference type="STRING" id="203119.Cthe_2403"/>
<dbReference type="GeneID" id="35804073"/>
<dbReference type="KEGG" id="cth:Cthe_2403"/>
<dbReference type="eggNOG" id="COG1947">
    <property type="taxonomic scope" value="Bacteria"/>
</dbReference>
<dbReference type="HOGENOM" id="CLU_053057_1_1_9"/>
<dbReference type="UniPathway" id="UPA00056">
    <property type="reaction ID" value="UER00094"/>
</dbReference>
<dbReference type="Proteomes" id="UP000002145">
    <property type="component" value="Chromosome"/>
</dbReference>
<dbReference type="GO" id="GO:0050515">
    <property type="term" value="F:4-(cytidine 5'-diphospho)-2-C-methyl-D-erythritol kinase activity"/>
    <property type="evidence" value="ECO:0007669"/>
    <property type="project" value="UniProtKB-UniRule"/>
</dbReference>
<dbReference type="GO" id="GO:0005524">
    <property type="term" value="F:ATP binding"/>
    <property type="evidence" value="ECO:0007669"/>
    <property type="project" value="UniProtKB-UniRule"/>
</dbReference>
<dbReference type="GO" id="GO:0019288">
    <property type="term" value="P:isopentenyl diphosphate biosynthetic process, methylerythritol 4-phosphate pathway"/>
    <property type="evidence" value="ECO:0007669"/>
    <property type="project" value="UniProtKB-UniRule"/>
</dbReference>
<dbReference type="GO" id="GO:0016114">
    <property type="term" value="P:terpenoid biosynthetic process"/>
    <property type="evidence" value="ECO:0007669"/>
    <property type="project" value="InterPro"/>
</dbReference>
<dbReference type="Gene3D" id="3.30.230.10">
    <property type="match status" value="1"/>
</dbReference>
<dbReference type="Gene3D" id="3.30.70.890">
    <property type="entry name" value="GHMP kinase, C-terminal domain"/>
    <property type="match status" value="1"/>
</dbReference>
<dbReference type="HAMAP" id="MF_00061">
    <property type="entry name" value="IspE"/>
    <property type="match status" value="1"/>
</dbReference>
<dbReference type="InterPro" id="IPR013750">
    <property type="entry name" value="GHMP_kinase_C_dom"/>
</dbReference>
<dbReference type="InterPro" id="IPR036554">
    <property type="entry name" value="GHMP_kinase_C_sf"/>
</dbReference>
<dbReference type="InterPro" id="IPR006204">
    <property type="entry name" value="GHMP_kinase_N_dom"/>
</dbReference>
<dbReference type="InterPro" id="IPR004424">
    <property type="entry name" value="IspE"/>
</dbReference>
<dbReference type="InterPro" id="IPR020568">
    <property type="entry name" value="Ribosomal_Su5_D2-typ_SF"/>
</dbReference>
<dbReference type="InterPro" id="IPR014721">
    <property type="entry name" value="Ribsml_uS5_D2-typ_fold_subgr"/>
</dbReference>
<dbReference type="NCBIfam" id="TIGR00154">
    <property type="entry name" value="ispE"/>
    <property type="match status" value="1"/>
</dbReference>
<dbReference type="PANTHER" id="PTHR43527">
    <property type="entry name" value="4-DIPHOSPHOCYTIDYL-2-C-METHYL-D-ERYTHRITOL KINASE, CHLOROPLASTIC"/>
    <property type="match status" value="1"/>
</dbReference>
<dbReference type="PANTHER" id="PTHR43527:SF2">
    <property type="entry name" value="4-DIPHOSPHOCYTIDYL-2-C-METHYL-D-ERYTHRITOL KINASE, CHLOROPLASTIC"/>
    <property type="match status" value="1"/>
</dbReference>
<dbReference type="Pfam" id="PF08544">
    <property type="entry name" value="GHMP_kinases_C"/>
    <property type="match status" value="1"/>
</dbReference>
<dbReference type="Pfam" id="PF00288">
    <property type="entry name" value="GHMP_kinases_N"/>
    <property type="match status" value="1"/>
</dbReference>
<dbReference type="PIRSF" id="PIRSF010376">
    <property type="entry name" value="IspE"/>
    <property type="match status" value="1"/>
</dbReference>
<dbReference type="SUPFAM" id="SSF55060">
    <property type="entry name" value="GHMP Kinase, C-terminal domain"/>
    <property type="match status" value="1"/>
</dbReference>
<dbReference type="SUPFAM" id="SSF54211">
    <property type="entry name" value="Ribosomal protein S5 domain 2-like"/>
    <property type="match status" value="1"/>
</dbReference>
<reference key="1">
    <citation type="submission" date="2007-02" db="EMBL/GenBank/DDBJ databases">
        <title>Complete sequence of Clostridium thermocellum ATCC 27405.</title>
        <authorList>
            <consortium name="US DOE Joint Genome Institute"/>
            <person name="Copeland A."/>
            <person name="Lucas S."/>
            <person name="Lapidus A."/>
            <person name="Barry K."/>
            <person name="Detter J.C."/>
            <person name="Glavina del Rio T."/>
            <person name="Hammon N."/>
            <person name="Israni S."/>
            <person name="Dalin E."/>
            <person name="Tice H."/>
            <person name="Pitluck S."/>
            <person name="Chertkov O."/>
            <person name="Brettin T."/>
            <person name="Bruce D."/>
            <person name="Han C."/>
            <person name="Tapia R."/>
            <person name="Gilna P."/>
            <person name="Schmutz J."/>
            <person name="Larimer F."/>
            <person name="Land M."/>
            <person name="Hauser L."/>
            <person name="Kyrpides N."/>
            <person name="Mikhailova N."/>
            <person name="Wu J.H.D."/>
            <person name="Newcomb M."/>
            <person name="Richardson P."/>
        </authorList>
    </citation>
    <scope>NUCLEOTIDE SEQUENCE [LARGE SCALE GENOMIC DNA]</scope>
    <source>
        <strain>ATCC 27405 / DSM 1237 / JCM 9322 / NBRC 103400 / NCIMB 10682 / NRRL B-4536 / VPI 7372</strain>
    </source>
</reference>
<evidence type="ECO:0000255" key="1">
    <source>
        <dbReference type="HAMAP-Rule" id="MF_00061"/>
    </source>
</evidence>